<reference key="1">
    <citation type="journal article" date="2006" name="Appl. Environ. Microbiol.">
        <title>Complete genome sequence of the marine, chemolithoautotrophic, ammonia-oxidizing bacterium Nitrosococcus oceani ATCC 19707.</title>
        <authorList>
            <person name="Klotz M.G."/>
            <person name="Arp D.J."/>
            <person name="Chain P.S.G."/>
            <person name="El-Sheikh A.F."/>
            <person name="Hauser L.J."/>
            <person name="Hommes N.G."/>
            <person name="Larimer F.W."/>
            <person name="Malfatti S.A."/>
            <person name="Norton J.M."/>
            <person name="Poret-Peterson A.T."/>
            <person name="Vergez L.M."/>
            <person name="Ward B.B."/>
        </authorList>
    </citation>
    <scope>NUCLEOTIDE SEQUENCE [LARGE SCALE GENOMIC DNA]</scope>
    <source>
        <strain>ATCC 19707 / BCRC 17464 / JCM 30415 / NCIMB 11848 / C-107</strain>
    </source>
</reference>
<dbReference type="EC" id="1.1.1.37" evidence="1"/>
<dbReference type="EMBL" id="CP000127">
    <property type="protein sequence ID" value="ABA59249.1"/>
    <property type="molecule type" value="Genomic_DNA"/>
</dbReference>
<dbReference type="SMR" id="Q3J7E7"/>
<dbReference type="FunCoup" id="Q3J7E7">
    <property type="interactions" value="506"/>
</dbReference>
<dbReference type="STRING" id="323261.Noc_2802"/>
<dbReference type="KEGG" id="noc:Noc_2802"/>
<dbReference type="eggNOG" id="COG0039">
    <property type="taxonomic scope" value="Bacteria"/>
</dbReference>
<dbReference type="HOGENOM" id="CLU_045401_2_1_6"/>
<dbReference type="InParanoid" id="Q3J7E7"/>
<dbReference type="Proteomes" id="UP000006838">
    <property type="component" value="Chromosome"/>
</dbReference>
<dbReference type="GO" id="GO:0004459">
    <property type="term" value="F:L-lactate dehydrogenase activity"/>
    <property type="evidence" value="ECO:0007669"/>
    <property type="project" value="TreeGrafter"/>
</dbReference>
<dbReference type="GO" id="GO:0030060">
    <property type="term" value="F:L-malate dehydrogenase (NAD+) activity"/>
    <property type="evidence" value="ECO:0007669"/>
    <property type="project" value="UniProtKB-UniRule"/>
</dbReference>
<dbReference type="GO" id="GO:0006089">
    <property type="term" value="P:lactate metabolic process"/>
    <property type="evidence" value="ECO:0007669"/>
    <property type="project" value="TreeGrafter"/>
</dbReference>
<dbReference type="GO" id="GO:0006099">
    <property type="term" value="P:tricarboxylic acid cycle"/>
    <property type="evidence" value="ECO:0007669"/>
    <property type="project" value="UniProtKB-UniRule"/>
</dbReference>
<dbReference type="CDD" id="cd01339">
    <property type="entry name" value="LDH-like_MDH"/>
    <property type="match status" value="1"/>
</dbReference>
<dbReference type="FunFam" id="3.40.50.720:FF:000018">
    <property type="entry name" value="Malate dehydrogenase"/>
    <property type="match status" value="1"/>
</dbReference>
<dbReference type="Gene3D" id="3.90.110.10">
    <property type="entry name" value="Lactate dehydrogenase/glycoside hydrolase, family 4, C-terminal"/>
    <property type="match status" value="1"/>
</dbReference>
<dbReference type="Gene3D" id="3.40.50.720">
    <property type="entry name" value="NAD(P)-binding Rossmann-like Domain"/>
    <property type="match status" value="1"/>
</dbReference>
<dbReference type="HAMAP" id="MF_00487">
    <property type="entry name" value="Malate_dehydrog_3"/>
    <property type="match status" value="1"/>
</dbReference>
<dbReference type="InterPro" id="IPR001557">
    <property type="entry name" value="L-lactate/malate_DH"/>
</dbReference>
<dbReference type="InterPro" id="IPR022383">
    <property type="entry name" value="Lactate/malate_DH_C"/>
</dbReference>
<dbReference type="InterPro" id="IPR001236">
    <property type="entry name" value="Lactate/malate_DH_N"/>
</dbReference>
<dbReference type="InterPro" id="IPR015955">
    <property type="entry name" value="Lactate_DH/Glyco_Ohase_4_C"/>
</dbReference>
<dbReference type="InterPro" id="IPR011275">
    <property type="entry name" value="Malate_DH_type3"/>
</dbReference>
<dbReference type="InterPro" id="IPR036291">
    <property type="entry name" value="NAD(P)-bd_dom_sf"/>
</dbReference>
<dbReference type="NCBIfam" id="TIGR01763">
    <property type="entry name" value="MalateDH_bact"/>
    <property type="match status" value="1"/>
</dbReference>
<dbReference type="NCBIfam" id="NF004863">
    <property type="entry name" value="PRK06223.1"/>
    <property type="match status" value="1"/>
</dbReference>
<dbReference type="PANTHER" id="PTHR43128">
    <property type="entry name" value="L-2-HYDROXYCARBOXYLATE DEHYDROGENASE (NAD(P)(+))"/>
    <property type="match status" value="1"/>
</dbReference>
<dbReference type="PANTHER" id="PTHR43128:SF16">
    <property type="entry name" value="L-LACTATE DEHYDROGENASE"/>
    <property type="match status" value="1"/>
</dbReference>
<dbReference type="Pfam" id="PF02866">
    <property type="entry name" value="Ldh_1_C"/>
    <property type="match status" value="1"/>
</dbReference>
<dbReference type="Pfam" id="PF00056">
    <property type="entry name" value="Ldh_1_N"/>
    <property type="match status" value="1"/>
</dbReference>
<dbReference type="PIRSF" id="PIRSF000102">
    <property type="entry name" value="Lac_mal_DH"/>
    <property type="match status" value="1"/>
</dbReference>
<dbReference type="PRINTS" id="PR00086">
    <property type="entry name" value="LLDHDRGNASE"/>
</dbReference>
<dbReference type="SUPFAM" id="SSF56327">
    <property type="entry name" value="LDH C-terminal domain-like"/>
    <property type="match status" value="1"/>
</dbReference>
<dbReference type="SUPFAM" id="SSF51735">
    <property type="entry name" value="NAD(P)-binding Rossmann-fold domains"/>
    <property type="match status" value="1"/>
</dbReference>
<gene>
    <name evidence="1" type="primary">mdh</name>
    <name type="ordered locus">Noc_2802</name>
</gene>
<name>MDH_NITOC</name>
<evidence type="ECO:0000255" key="1">
    <source>
        <dbReference type="HAMAP-Rule" id="MF_00487"/>
    </source>
</evidence>
<keyword id="KW-0520">NAD</keyword>
<keyword id="KW-0560">Oxidoreductase</keyword>
<keyword id="KW-1185">Reference proteome</keyword>
<keyword id="KW-0816">Tricarboxylic acid cycle</keyword>
<accession>Q3J7E7</accession>
<sequence>MAIKKITIVGAGRVGEATAQFLVKNELCRELVLLDAQEGVAQGAALDIQQSAPLFDFDARVTGSTNYELIADSDLVVITAGKPRKPGMSRSDVLDSNLPIITDIMNNVMRFAPQSLVMIVTNPVDVLTYHAWRHCGWDRARVFGQAGVLDSARMASFIAGETGLSVKDISAMVLGGHGDTMLPLIRYTTISGIPLTHFLDQQVIEKIIERTRHGGFEILRLRQTSSAYDAPAAAIAGMVDAIRHNRKRILPCVAILQGEYGENEVAMGVPSVLGGDGLERIVELPLTEEEQEQFKHSVEAIRTDLAHLARA</sequence>
<feature type="chain" id="PRO_0000241955" description="Malate dehydrogenase">
    <location>
        <begin position="1"/>
        <end position="311"/>
    </location>
</feature>
<feature type="active site" description="Proton acceptor" evidence="1">
    <location>
        <position position="177"/>
    </location>
</feature>
<feature type="binding site" evidence="1">
    <location>
        <begin position="10"/>
        <end position="15"/>
    </location>
    <ligand>
        <name>NAD(+)</name>
        <dbReference type="ChEBI" id="CHEBI:57540"/>
    </ligand>
</feature>
<feature type="binding site" evidence="1">
    <location>
        <position position="35"/>
    </location>
    <ligand>
        <name>NAD(+)</name>
        <dbReference type="ChEBI" id="CHEBI:57540"/>
    </ligand>
</feature>
<feature type="binding site" evidence="1">
    <location>
        <position position="84"/>
    </location>
    <ligand>
        <name>substrate</name>
    </ligand>
</feature>
<feature type="binding site" evidence="1">
    <location>
        <position position="90"/>
    </location>
    <ligand>
        <name>substrate</name>
    </ligand>
</feature>
<feature type="binding site" evidence="1">
    <location>
        <position position="97"/>
    </location>
    <ligand>
        <name>NAD(+)</name>
        <dbReference type="ChEBI" id="CHEBI:57540"/>
    </ligand>
</feature>
<feature type="binding site" evidence="1">
    <location>
        <begin position="120"/>
        <end position="122"/>
    </location>
    <ligand>
        <name>NAD(+)</name>
        <dbReference type="ChEBI" id="CHEBI:57540"/>
    </ligand>
</feature>
<feature type="binding site" evidence="1">
    <location>
        <position position="122"/>
    </location>
    <ligand>
        <name>substrate</name>
    </ligand>
</feature>
<feature type="binding site" evidence="1">
    <location>
        <position position="153"/>
    </location>
    <ligand>
        <name>substrate</name>
    </ligand>
</feature>
<organism>
    <name type="scientific">Nitrosococcus oceani (strain ATCC 19707 / BCRC 17464 / JCM 30415 / NCIMB 11848 / C-107)</name>
    <dbReference type="NCBI Taxonomy" id="323261"/>
    <lineage>
        <taxon>Bacteria</taxon>
        <taxon>Pseudomonadati</taxon>
        <taxon>Pseudomonadota</taxon>
        <taxon>Gammaproteobacteria</taxon>
        <taxon>Chromatiales</taxon>
        <taxon>Chromatiaceae</taxon>
        <taxon>Nitrosococcus</taxon>
    </lineage>
</organism>
<proteinExistence type="inferred from homology"/>
<protein>
    <recommendedName>
        <fullName evidence="1">Malate dehydrogenase</fullName>
        <ecNumber evidence="1">1.1.1.37</ecNumber>
    </recommendedName>
</protein>
<comment type="function">
    <text evidence="1">Catalyzes the reversible oxidation of malate to oxaloacetate.</text>
</comment>
<comment type="catalytic activity">
    <reaction evidence="1">
        <text>(S)-malate + NAD(+) = oxaloacetate + NADH + H(+)</text>
        <dbReference type="Rhea" id="RHEA:21432"/>
        <dbReference type="ChEBI" id="CHEBI:15378"/>
        <dbReference type="ChEBI" id="CHEBI:15589"/>
        <dbReference type="ChEBI" id="CHEBI:16452"/>
        <dbReference type="ChEBI" id="CHEBI:57540"/>
        <dbReference type="ChEBI" id="CHEBI:57945"/>
        <dbReference type="EC" id="1.1.1.37"/>
    </reaction>
</comment>
<comment type="similarity">
    <text evidence="1">Belongs to the LDH/MDH superfamily. MDH type 3 family.</text>
</comment>